<feature type="chain" id="PRO_0000224230" description="Chaperone protein HtpG">
    <location>
        <begin position="1"/>
        <end position="624"/>
    </location>
</feature>
<feature type="region of interest" description="A; substrate-binding" evidence="1">
    <location>
        <begin position="1"/>
        <end position="336"/>
    </location>
</feature>
<feature type="region of interest" description="B" evidence="1">
    <location>
        <begin position="337"/>
        <end position="552"/>
    </location>
</feature>
<feature type="region of interest" description="C" evidence="1">
    <location>
        <begin position="553"/>
        <end position="624"/>
    </location>
</feature>
<comment type="function">
    <text evidence="1">Molecular chaperone. Has ATPase activity.</text>
</comment>
<comment type="subunit">
    <text evidence="1">Homodimer.</text>
</comment>
<comment type="subcellular location">
    <subcellularLocation>
        <location evidence="1">Cytoplasm</location>
    </subcellularLocation>
</comment>
<comment type="similarity">
    <text evidence="1">Belongs to the heat shock protein 90 family.</text>
</comment>
<comment type="sequence caution" evidence="2">
    <conflict type="erroneous initiation">
        <sequence resource="EMBL-CDS" id="AAV78121"/>
    </conflict>
</comment>
<dbReference type="EMBL" id="CP000026">
    <property type="protein sequence ID" value="AAV78121.1"/>
    <property type="status" value="ALT_INIT"/>
    <property type="molecule type" value="Genomic_DNA"/>
</dbReference>
<dbReference type="SMR" id="Q5PFK7"/>
<dbReference type="KEGG" id="spt:SPA2235"/>
<dbReference type="HOGENOM" id="CLU_006684_3_0_6"/>
<dbReference type="Proteomes" id="UP000008185">
    <property type="component" value="Chromosome"/>
</dbReference>
<dbReference type="GO" id="GO:0005737">
    <property type="term" value="C:cytoplasm"/>
    <property type="evidence" value="ECO:0007669"/>
    <property type="project" value="UniProtKB-SubCell"/>
</dbReference>
<dbReference type="GO" id="GO:0005524">
    <property type="term" value="F:ATP binding"/>
    <property type="evidence" value="ECO:0007669"/>
    <property type="project" value="UniProtKB-UniRule"/>
</dbReference>
<dbReference type="GO" id="GO:0016887">
    <property type="term" value="F:ATP hydrolysis activity"/>
    <property type="evidence" value="ECO:0007669"/>
    <property type="project" value="InterPro"/>
</dbReference>
<dbReference type="GO" id="GO:0140662">
    <property type="term" value="F:ATP-dependent protein folding chaperone"/>
    <property type="evidence" value="ECO:0007669"/>
    <property type="project" value="InterPro"/>
</dbReference>
<dbReference type="GO" id="GO:0051082">
    <property type="term" value="F:unfolded protein binding"/>
    <property type="evidence" value="ECO:0007669"/>
    <property type="project" value="UniProtKB-UniRule"/>
</dbReference>
<dbReference type="CDD" id="cd16927">
    <property type="entry name" value="HATPase_Hsp90-like"/>
    <property type="match status" value="1"/>
</dbReference>
<dbReference type="FunFam" id="1.20.120.790:FF:000002">
    <property type="entry name" value="Molecular chaperone HtpG"/>
    <property type="match status" value="1"/>
</dbReference>
<dbReference type="FunFam" id="3.30.230.80:FF:000002">
    <property type="entry name" value="Molecular chaperone HtpG"/>
    <property type="match status" value="1"/>
</dbReference>
<dbReference type="FunFam" id="3.30.565.10:FF:000009">
    <property type="entry name" value="Molecular chaperone HtpG"/>
    <property type="match status" value="1"/>
</dbReference>
<dbReference type="FunFam" id="3.40.50.11260:FF:000002">
    <property type="entry name" value="Molecular chaperone HtpG"/>
    <property type="match status" value="1"/>
</dbReference>
<dbReference type="Gene3D" id="3.30.230.80">
    <property type="match status" value="1"/>
</dbReference>
<dbReference type="Gene3D" id="3.40.50.11260">
    <property type="match status" value="1"/>
</dbReference>
<dbReference type="Gene3D" id="1.20.120.790">
    <property type="entry name" value="Heat shock protein 90, C-terminal domain"/>
    <property type="match status" value="1"/>
</dbReference>
<dbReference type="Gene3D" id="3.30.565.10">
    <property type="entry name" value="Histidine kinase-like ATPase, C-terminal domain"/>
    <property type="match status" value="1"/>
</dbReference>
<dbReference type="HAMAP" id="MF_00505">
    <property type="entry name" value="HSP90"/>
    <property type="match status" value="1"/>
</dbReference>
<dbReference type="InterPro" id="IPR036890">
    <property type="entry name" value="HATPase_C_sf"/>
</dbReference>
<dbReference type="InterPro" id="IPR019805">
    <property type="entry name" value="Heat_shock_protein_90_CS"/>
</dbReference>
<dbReference type="InterPro" id="IPR037196">
    <property type="entry name" value="HSP90_C"/>
</dbReference>
<dbReference type="InterPro" id="IPR001404">
    <property type="entry name" value="Hsp90_fam"/>
</dbReference>
<dbReference type="InterPro" id="IPR020575">
    <property type="entry name" value="Hsp90_N"/>
</dbReference>
<dbReference type="InterPro" id="IPR020568">
    <property type="entry name" value="Ribosomal_Su5_D2-typ_SF"/>
</dbReference>
<dbReference type="NCBIfam" id="NF003555">
    <property type="entry name" value="PRK05218.1"/>
    <property type="match status" value="1"/>
</dbReference>
<dbReference type="PANTHER" id="PTHR11528">
    <property type="entry name" value="HEAT SHOCK PROTEIN 90 FAMILY MEMBER"/>
    <property type="match status" value="1"/>
</dbReference>
<dbReference type="Pfam" id="PF13589">
    <property type="entry name" value="HATPase_c_3"/>
    <property type="match status" value="1"/>
</dbReference>
<dbReference type="Pfam" id="PF00183">
    <property type="entry name" value="HSP90"/>
    <property type="match status" value="1"/>
</dbReference>
<dbReference type="PIRSF" id="PIRSF002583">
    <property type="entry name" value="Hsp90"/>
    <property type="match status" value="1"/>
</dbReference>
<dbReference type="PRINTS" id="PR00775">
    <property type="entry name" value="HEATSHOCK90"/>
</dbReference>
<dbReference type="SMART" id="SM00387">
    <property type="entry name" value="HATPase_c"/>
    <property type="match status" value="1"/>
</dbReference>
<dbReference type="SUPFAM" id="SSF55874">
    <property type="entry name" value="ATPase domain of HSP90 chaperone/DNA topoisomerase II/histidine kinase"/>
    <property type="match status" value="1"/>
</dbReference>
<dbReference type="SUPFAM" id="SSF110942">
    <property type="entry name" value="HSP90 C-terminal domain"/>
    <property type="match status" value="1"/>
</dbReference>
<dbReference type="SUPFAM" id="SSF54211">
    <property type="entry name" value="Ribosomal protein S5 domain 2-like"/>
    <property type="match status" value="1"/>
</dbReference>
<dbReference type="PROSITE" id="PS00298">
    <property type="entry name" value="HSP90"/>
    <property type="match status" value="1"/>
</dbReference>
<gene>
    <name evidence="1" type="primary">htpG</name>
    <name type="ordered locus">SPA2235</name>
</gene>
<accession>Q5PFK7</accession>
<organism>
    <name type="scientific">Salmonella paratyphi A (strain ATCC 9150 / SARB42)</name>
    <dbReference type="NCBI Taxonomy" id="295319"/>
    <lineage>
        <taxon>Bacteria</taxon>
        <taxon>Pseudomonadati</taxon>
        <taxon>Pseudomonadota</taxon>
        <taxon>Gammaproteobacteria</taxon>
        <taxon>Enterobacterales</taxon>
        <taxon>Enterobacteriaceae</taxon>
        <taxon>Salmonella</taxon>
    </lineage>
</organism>
<protein>
    <recommendedName>
        <fullName evidence="1">Chaperone protein HtpG</fullName>
    </recommendedName>
    <alternativeName>
        <fullName evidence="1">Heat shock protein HtpG</fullName>
    </alternativeName>
    <alternativeName>
        <fullName evidence="1">High temperature protein G</fullName>
    </alternativeName>
</protein>
<name>HTPG_SALPA</name>
<sequence length="624" mass="71531">MKGQETRGFQSEVKQLLHLMIHSLYSNKEIFLRELISNASDAADKLRFRALSNPDLYEGDSELRVRVSFDKDKRTLTIADNGVGMNRDEVIDHLGTIAKSGTKSFLESMGSDQAKDSQLIGQFGVGFYSAFIVADKVTVRTRAAGDKPENGVFWESAGEGEYTVADITKNDRGTEITLHLREGEDEFLDDWRVRSIISKYSDHIALPVEIEKREEKDGETVISWEKINKAQALWTRNKSEIKDDEYNEFYKHIAHDFTDPLTWSHNRVEGKQEYTSLLYIPSQAPWDLWNRDHKHGLKLYVQRVFIMDDAEQFMPNYLRFVRGLIDSNDLPLNVSREILQDSTVTRNLRSALTKRVLQMLEKLAKDDAEKYQTFWKQFGLVLKEGPAEDHANQEAIAKLLRFASTHTDSSAQTVSLEDYVSRMKEGQEKIYYITADSYAAAKNSPHLELLRKKGIEVLLLSDRIDEWMMNYLTEFDGKAFQSVAKADESIEKLADEVDENAKEAEKALEPFVERVKTLLGDRVKEVRLTHRLTDTPAIVTTDADEMSTQMAKLFAAAGQSVPEVKYIFELNPDHVLVKRTADTEDEAQFKEWVELLLDQALFAERGTLEDPNQFIRRMNQLLVS</sequence>
<reference key="1">
    <citation type="journal article" date="2004" name="Nat. Genet.">
        <title>Comparison of genome degradation in Paratyphi A and Typhi, human-restricted serovars of Salmonella enterica that cause typhoid.</title>
        <authorList>
            <person name="McClelland M."/>
            <person name="Sanderson K.E."/>
            <person name="Clifton S.W."/>
            <person name="Latreille P."/>
            <person name="Porwollik S."/>
            <person name="Sabo A."/>
            <person name="Meyer R."/>
            <person name="Bieri T."/>
            <person name="Ozersky P."/>
            <person name="McLellan M."/>
            <person name="Harkins C.R."/>
            <person name="Wang C."/>
            <person name="Nguyen C."/>
            <person name="Berghoff A."/>
            <person name="Elliott G."/>
            <person name="Kohlberg S."/>
            <person name="Strong C."/>
            <person name="Du F."/>
            <person name="Carter J."/>
            <person name="Kremizki C."/>
            <person name="Layman D."/>
            <person name="Leonard S."/>
            <person name="Sun H."/>
            <person name="Fulton L."/>
            <person name="Nash W."/>
            <person name="Miner T."/>
            <person name="Minx P."/>
            <person name="Delehaunty K."/>
            <person name="Fronick C."/>
            <person name="Magrini V."/>
            <person name="Nhan M."/>
            <person name="Warren W."/>
            <person name="Florea L."/>
            <person name="Spieth J."/>
            <person name="Wilson R.K."/>
        </authorList>
    </citation>
    <scope>NUCLEOTIDE SEQUENCE [LARGE SCALE GENOMIC DNA]</scope>
    <source>
        <strain>ATCC 9150 / SARB42</strain>
    </source>
</reference>
<evidence type="ECO:0000255" key="1">
    <source>
        <dbReference type="HAMAP-Rule" id="MF_00505"/>
    </source>
</evidence>
<evidence type="ECO:0000305" key="2"/>
<proteinExistence type="inferred from homology"/>
<keyword id="KW-0067">ATP-binding</keyword>
<keyword id="KW-0143">Chaperone</keyword>
<keyword id="KW-0963">Cytoplasm</keyword>
<keyword id="KW-0547">Nucleotide-binding</keyword>
<keyword id="KW-0346">Stress response</keyword>